<dbReference type="EC" id="2.1.3.3"/>
<dbReference type="EMBL" id="AE015929">
    <property type="protein sequence ID" value="AAO03826.1"/>
    <property type="molecule type" value="Genomic_DNA"/>
</dbReference>
<dbReference type="RefSeq" id="NP_763784.1">
    <property type="nucleotide sequence ID" value="NC_004461.1"/>
</dbReference>
<dbReference type="RefSeq" id="WP_001830522.1">
    <property type="nucleotide sequence ID" value="NZ_WBME01000011.1"/>
</dbReference>
<dbReference type="SMR" id="P0C0N1"/>
<dbReference type="MoonProt" id="P0C0N1"/>
<dbReference type="GeneID" id="50017625"/>
<dbReference type="KEGG" id="sep:SE_0229"/>
<dbReference type="PATRIC" id="fig|176280.10.peg.208"/>
<dbReference type="eggNOG" id="COG0078">
    <property type="taxonomic scope" value="Bacteria"/>
</dbReference>
<dbReference type="HOGENOM" id="CLU_043846_3_1_9"/>
<dbReference type="OrthoDB" id="9802587at2"/>
<dbReference type="UniPathway" id="UPA00068">
    <property type="reaction ID" value="UER00112"/>
</dbReference>
<dbReference type="Proteomes" id="UP000001411">
    <property type="component" value="Chromosome"/>
</dbReference>
<dbReference type="GO" id="GO:0005737">
    <property type="term" value="C:cytoplasm"/>
    <property type="evidence" value="ECO:0007669"/>
    <property type="project" value="UniProtKB-SubCell"/>
</dbReference>
<dbReference type="GO" id="GO:0016597">
    <property type="term" value="F:amino acid binding"/>
    <property type="evidence" value="ECO:0007669"/>
    <property type="project" value="InterPro"/>
</dbReference>
<dbReference type="GO" id="GO:0004585">
    <property type="term" value="F:ornithine carbamoyltransferase activity"/>
    <property type="evidence" value="ECO:0007669"/>
    <property type="project" value="UniProtKB-UniRule"/>
</dbReference>
<dbReference type="GO" id="GO:0042450">
    <property type="term" value="P:arginine biosynthetic process via ornithine"/>
    <property type="evidence" value="ECO:0007669"/>
    <property type="project" value="TreeGrafter"/>
</dbReference>
<dbReference type="GO" id="GO:0019240">
    <property type="term" value="P:citrulline biosynthetic process"/>
    <property type="evidence" value="ECO:0007669"/>
    <property type="project" value="TreeGrafter"/>
</dbReference>
<dbReference type="GO" id="GO:0006526">
    <property type="term" value="P:L-arginine biosynthetic process"/>
    <property type="evidence" value="ECO:0007669"/>
    <property type="project" value="UniProtKB-UniRule"/>
</dbReference>
<dbReference type="FunFam" id="3.40.50.1370:FF:000004">
    <property type="entry name" value="Ornithine carbamoyltransferase"/>
    <property type="match status" value="1"/>
</dbReference>
<dbReference type="Gene3D" id="3.40.50.1370">
    <property type="entry name" value="Aspartate/ornithine carbamoyltransferase"/>
    <property type="match status" value="2"/>
</dbReference>
<dbReference type="HAMAP" id="MF_01109">
    <property type="entry name" value="OTCase"/>
    <property type="match status" value="1"/>
</dbReference>
<dbReference type="InterPro" id="IPR006132">
    <property type="entry name" value="Asp/Orn_carbamoyltranf_P-bd"/>
</dbReference>
<dbReference type="InterPro" id="IPR006130">
    <property type="entry name" value="Asp/Orn_carbamoylTrfase"/>
</dbReference>
<dbReference type="InterPro" id="IPR036901">
    <property type="entry name" value="Asp/Orn_carbamoylTrfase_sf"/>
</dbReference>
<dbReference type="InterPro" id="IPR006131">
    <property type="entry name" value="Asp_carbamoyltransf_Asp/Orn-bd"/>
</dbReference>
<dbReference type="InterPro" id="IPR002292">
    <property type="entry name" value="Orn/put_carbamltrans"/>
</dbReference>
<dbReference type="InterPro" id="IPR024904">
    <property type="entry name" value="OTCase_ArgI"/>
</dbReference>
<dbReference type="NCBIfam" id="TIGR00658">
    <property type="entry name" value="orni_carb_tr"/>
    <property type="match status" value="1"/>
</dbReference>
<dbReference type="NCBIfam" id="NF003286">
    <property type="entry name" value="PRK04284.1"/>
    <property type="match status" value="1"/>
</dbReference>
<dbReference type="PANTHER" id="PTHR45753:SF2">
    <property type="entry name" value="ORNITHINE CARBAMOYLTRANSFERASE"/>
    <property type="match status" value="1"/>
</dbReference>
<dbReference type="PANTHER" id="PTHR45753">
    <property type="entry name" value="ORNITHINE CARBAMOYLTRANSFERASE, MITOCHONDRIAL"/>
    <property type="match status" value="1"/>
</dbReference>
<dbReference type="Pfam" id="PF00185">
    <property type="entry name" value="OTCace"/>
    <property type="match status" value="1"/>
</dbReference>
<dbReference type="Pfam" id="PF02729">
    <property type="entry name" value="OTCace_N"/>
    <property type="match status" value="1"/>
</dbReference>
<dbReference type="PRINTS" id="PR00100">
    <property type="entry name" value="AOTCASE"/>
</dbReference>
<dbReference type="PRINTS" id="PR00102">
    <property type="entry name" value="OTCASE"/>
</dbReference>
<dbReference type="SUPFAM" id="SSF53671">
    <property type="entry name" value="Aspartate/ornithine carbamoyltransferase"/>
    <property type="match status" value="1"/>
</dbReference>
<dbReference type="PROSITE" id="PS00097">
    <property type="entry name" value="CARBAMOYLTRANSFERASE"/>
    <property type="match status" value="1"/>
</dbReference>
<evidence type="ECO:0000250" key="1"/>
<evidence type="ECO:0000255" key="2">
    <source>
        <dbReference type="HAMAP-Rule" id="MF_01109"/>
    </source>
</evidence>
<evidence type="ECO:0000305" key="3"/>
<comment type="function">
    <text evidence="1">Has vitronectin and fibronectin-binding activity.</text>
</comment>
<comment type="function">
    <text evidence="1">Reversibly catalyzes the transfer of the carbamoyl group from carbamoyl phosphate (CP) to the N(epsilon) atom of ornithine (ORN) to produce L-citrulline.</text>
</comment>
<comment type="catalytic activity">
    <reaction>
        <text>carbamoyl phosphate + L-ornithine = L-citrulline + phosphate + H(+)</text>
        <dbReference type="Rhea" id="RHEA:19513"/>
        <dbReference type="ChEBI" id="CHEBI:15378"/>
        <dbReference type="ChEBI" id="CHEBI:43474"/>
        <dbReference type="ChEBI" id="CHEBI:46911"/>
        <dbReference type="ChEBI" id="CHEBI:57743"/>
        <dbReference type="ChEBI" id="CHEBI:58228"/>
        <dbReference type="EC" id="2.1.3.3"/>
    </reaction>
</comment>
<comment type="pathway">
    <text>Amino-acid biosynthesis; L-arginine biosynthesis; L-arginine from L-ornithine and carbamoyl phosphate: step 1/3.</text>
</comment>
<comment type="subcellular location">
    <subcellularLocation>
        <location evidence="1">Cytoplasm</location>
    </subcellularLocation>
</comment>
<comment type="similarity">
    <text evidence="3">Belongs to the aspartate/ornithine carbamoyltransferase superfamily. OTCase family.</text>
</comment>
<organism>
    <name type="scientific">Staphylococcus epidermidis (strain ATCC 12228 / FDA PCI 1200)</name>
    <dbReference type="NCBI Taxonomy" id="176280"/>
    <lineage>
        <taxon>Bacteria</taxon>
        <taxon>Bacillati</taxon>
        <taxon>Bacillota</taxon>
        <taxon>Bacilli</taxon>
        <taxon>Bacillales</taxon>
        <taxon>Staphylococcaceae</taxon>
        <taxon>Staphylococcus</taxon>
    </lineage>
</organism>
<protein>
    <recommendedName>
        <fullName>Ornithine carbamoyltransferase</fullName>
        <shortName>OTCase</shortName>
        <ecNumber>2.1.3.3</ecNumber>
    </recommendedName>
</protein>
<keyword id="KW-0028">Amino-acid biosynthesis</keyword>
<keyword id="KW-0055">Arginine biosynthesis</keyword>
<keyword id="KW-0963">Cytoplasm</keyword>
<keyword id="KW-0808">Transferase</keyword>
<name>OTC_STAES</name>
<reference key="1">
    <citation type="journal article" date="2003" name="Mol. Microbiol.">
        <title>Genome-based analysis of virulence genes in a non-biofilm-forming Staphylococcus epidermidis strain (ATCC 12228).</title>
        <authorList>
            <person name="Zhang Y.-Q."/>
            <person name="Ren S.-X."/>
            <person name="Li H.-L."/>
            <person name="Wang Y.-X."/>
            <person name="Fu G."/>
            <person name="Yang J."/>
            <person name="Qin Z.-Q."/>
            <person name="Miao Y.-G."/>
            <person name="Wang W.-Y."/>
            <person name="Chen R.-S."/>
            <person name="Shen Y."/>
            <person name="Chen Z."/>
            <person name="Yuan Z.-H."/>
            <person name="Zhao G.-P."/>
            <person name="Qu D."/>
            <person name="Danchin A."/>
            <person name="Wen Y.-M."/>
        </authorList>
    </citation>
    <scope>NUCLEOTIDE SEQUENCE [LARGE SCALE GENOMIC DNA]</scope>
    <source>
        <strain>ATCC 12228 / FDA PCI 1200</strain>
    </source>
</reference>
<gene>
    <name type="primary">argF</name>
    <name type="ordered locus">SE_0229</name>
</gene>
<proteinExistence type="inferred from homology"/>
<feature type="chain" id="PRO_0000113022" description="Ornithine carbamoyltransferase">
    <location>
        <begin position="1"/>
        <end position="333"/>
    </location>
</feature>
<feature type="binding site" evidence="2">
    <location>
        <begin position="56"/>
        <end position="59"/>
    </location>
    <ligand>
        <name>carbamoyl phosphate</name>
        <dbReference type="ChEBI" id="CHEBI:58228"/>
    </ligand>
</feature>
<feature type="binding site" evidence="2">
    <location>
        <position position="83"/>
    </location>
    <ligand>
        <name>carbamoyl phosphate</name>
        <dbReference type="ChEBI" id="CHEBI:58228"/>
    </ligand>
</feature>
<feature type="binding site" evidence="2">
    <location>
        <position position="107"/>
    </location>
    <ligand>
        <name>carbamoyl phosphate</name>
        <dbReference type="ChEBI" id="CHEBI:58228"/>
    </ligand>
</feature>
<feature type="binding site" evidence="2">
    <location>
        <begin position="134"/>
        <end position="137"/>
    </location>
    <ligand>
        <name>carbamoyl phosphate</name>
        <dbReference type="ChEBI" id="CHEBI:58228"/>
    </ligand>
</feature>
<feature type="binding site" evidence="2">
    <location>
        <position position="167"/>
    </location>
    <ligand>
        <name>L-ornithine</name>
        <dbReference type="ChEBI" id="CHEBI:46911"/>
    </ligand>
</feature>
<feature type="binding site" evidence="2">
    <location>
        <position position="231"/>
    </location>
    <ligand>
        <name>L-ornithine</name>
        <dbReference type="ChEBI" id="CHEBI:46911"/>
    </ligand>
</feature>
<feature type="binding site" evidence="2">
    <location>
        <begin position="235"/>
        <end position="236"/>
    </location>
    <ligand>
        <name>L-ornithine</name>
        <dbReference type="ChEBI" id="CHEBI:46911"/>
    </ligand>
</feature>
<feature type="binding site" evidence="2">
    <location>
        <begin position="273"/>
        <end position="274"/>
    </location>
    <ligand>
        <name>carbamoyl phosphate</name>
        <dbReference type="ChEBI" id="CHEBI:58228"/>
    </ligand>
</feature>
<feature type="binding site" evidence="2">
    <location>
        <position position="318"/>
    </location>
    <ligand>
        <name>carbamoyl phosphate</name>
        <dbReference type="ChEBI" id="CHEBI:58228"/>
    </ligand>
</feature>
<accession>P0C0N1</accession>
<accession>P81682</accession>
<sequence length="333" mass="37552">MKNLRNRSFLTLLDFSRQEVEFLLTLSEDLKRAKYIGTEKPMLKNKNIALLFEKDSTRTRCAFEVAAHDQGAHVTYLGPTGSQMGKKETAKDTARVLGGMYDGIEYRGFSQRTVETLAQYSGVPVWNGLTDEDHPTQVLADFLTAKEVLKKEYADINFTYVGDGRNNVANALMQGAAIMGMNFHLVCPKELNPTEELLNRCERIATENGGNILITDDIDKGVKDSDVIYTDVWVSMGEPDEVWQERLKLLKPYQVNQALLEKTGNPNVIFEHCLPSFHNAETKIGQQIYEKYGISEMEVTDDVFESKASVVFQEAENRMHTIKAVMVATLGEF</sequence>